<dbReference type="EMBL" id="AJ132186">
    <property type="protein sequence ID" value="CAB44026.1"/>
    <property type="molecule type" value="Genomic_DNA"/>
</dbReference>
<dbReference type="KEGG" id="vg:993379"/>
<dbReference type="Proteomes" id="UP001508024">
    <property type="component" value="Genome"/>
</dbReference>
<dbReference type="GO" id="GO:0030430">
    <property type="term" value="C:host cell cytoplasm"/>
    <property type="evidence" value="ECO:0007669"/>
    <property type="project" value="UniProtKB-SubCell"/>
</dbReference>
<dbReference type="GO" id="GO:0042025">
    <property type="term" value="C:host cell nucleus"/>
    <property type="evidence" value="ECO:0007669"/>
    <property type="project" value="UniProtKB-SubCell"/>
</dbReference>
<dbReference type="InterPro" id="IPR008706">
    <property type="entry name" value="Nanovirus_C8"/>
</dbReference>
<dbReference type="Pfam" id="PF05629">
    <property type="entry name" value="Nanovirus_C8"/>
    <property type="match status" value="1"/>
</dbReference>
<organismHost>
    <name type="scientific">Cicer arietinum</name>
    <name type="common">Chickpea</name>
    <name type="synonym">Garbanzo</name>
    <dbReference type="NCBI Taxonomy" id="3827"/>
</organismHost>
<organismHost>
    <name type="scientific">Lens culinaris</name>
    <name type="common">Lentil</name>
    <name type="synonym">Cicer lens</name>
    <dbReference type="NCBI Taxonomy" id="3864"/>
</organismHost>
<organismHost>
    <name type="scientific">Phaseolus vulgaris</name>
    <name type="common">Kidney bean</name>
    <name type="synonym">French bean</name>
    <dbReference type="NCBI Taxonomy" id="3885"/>
</organismHost>
<organismHost>
    <name type="scientific">Vicia faba</name>
    <name type="common">Broad bean</name>
    <name type="synonym">Faba vulgaris</name>
    <dbReference type="NCBI Taxonomy" id="3906"/>
</organismHost>
<sequence length="153" mass="17408">MADWFSSPLKTCTHVCDFPSLAGDPQQEIMCCDSMKNKLQDSRKVLLVSCSVSFNGSFYGGNRNVRGQLQISMVEDDGVCRPIGYVPIGGYLYHNDYGYYEGARTFNLDLESQYLKKDEDYNRKFLVSVFNENGLDSQCDLKVFIVHSIRIKV</sequence>
<reference key="1">
    <citation type="journal article" date="1998" name="J. Gen. Virol.">
        <title>Ten distinct circular ssDNA components, four of which encode putative replication-associated proteins, are associated with the faba bean necrotic yellows virus genome.</title>
        <authorList>
            <person name="Katul L."/>
            <person name="Timchenko T."/>
            <person name="Gronenborn B."/>
            <person name="Vetten H.J."/>
        </authorList>
    </citation>
    <scope>NUCLEOTIDE SEQUENCE [GENOMIC DNA]</scope>
</reference>
<feature type="chain" id="PRO_0000378529" description="Putative nuclear shuttle protein">
    <location>
        <begin position="1"/>
        <end position="153"/>
    </location>
</feature>
<comment type="function">
    <text>Putative nuclear shuttle protein.</text>
</comment>
<comment type="subcellular location">
    <subcellularLocation>
        <location evidence="1">Host nucleus</location>
    </subcellularLocation>
    <subcellularLocation>
        <location evidence="1">Host cytoplasm</location>
    </subcellularLocation>
</comment>
<comment type="similarity">
    <text evidence="2">Belongs to the nanoviridae nuclear shuttle protein family.</text>
</comment>
<protein>
    <recommendedName>
        <fullName>Putative nuclear shuttle protein</fullName>
    </recommendedName>
</protein>
<name>NSP_FBNY1</name>
<gene>
    <name type="primary">DNA-N</name>
    <name type="synonym">C8</name>
</gene>
<organism>
    <name type="scientific">Faba bean necrotic yellows virus (isolate Egyptian EV1-93)</name>
    <name type="common">FBNYV</name>
    <dbReference type="NCBI Taxonomy" id="291603"/>
    <lineage>
        <taxon>Viruses</taxon>
        <taxon>Monodnaviria</taxon>
        <taxon>Shotokuvirae</taxon>
        <taxon>Cressdnaviricota</taxon>
        <taxon>Arfiviricetes</taxon>
        <taxon>Mulpavirales</taxon>
        <taxon>Nanoviridae</taxon>
        <taxon>Nanovirus</taxon>
        <taxon>Faba bean necrotic yellows virus</taxon>
    </lineage>
</organism>
<keyword id="KW-1035">Host cytoplasm</keyword>
<keyword id="KW-1048">Host nucleus</keyword>
<keyword id="KW-1185">Reference proteome</keyword>
<accession>Q9WIK1</accession>
<evidence type="ECO:0000250" key="1"/>
<evidence type="ECO:0000305" key="2"/>
<proteinExistence type="inferred from homology"/>